<comment type="function">
    <text evidence="1">One of two assembly initiator proteins, it binds directly to the 5'-end of the 23S rRNA, where it nucleates assembly of the 50S subunit.</text>
</comment>
<comment type="function">
    <text evidence="1">One of the proteins that surrounds the polypeptide exit tunnel on the outside of the subunit.</text>
</comment>
<comment type="subunit">
    <text evidence="1">Part of the 50S ribosomal subunit.</text>
</comment>
<comment type="similarity">
    <text evidence="1">Belongs to the universal ribosomal protein uL24 family.</text>
</comment>
<name>RL24_SALCH</name>
<sequence length="104" mass="11316">MAAKIRRDDEVIVLTGKDKGKRGKVKNVLSSGKVIVEGINLVKKHQKPVPALNQPGGIVEKEAAIQVSNVAIFNAATGKADRVGFRFEDGKKVRFFKSNSETIK</sequence>
<evidence type="ECO:0000255" key="1">
    <source>
        <dbReference type="HAMAP-Rule" id="MF_01326"/>
    </source>
</evidence>
<evidence type="ECO:0000305" key="2"/>
<dbReference type="EMBL" id="AE017220">
    <property type="protein sequence ID" value="AAX67269.1"/>
    <property type="molecule type" value="Genomic_DNA"/>
</dbReference>
<dbReference type="RefSeq" id="WP_000729185.1">
    <property type="nucleotide sequence ID" value="NC_006905.1"/>
</dbReference>
<dbReference type="SMR" id="Q57J43"/>
<dbReference type="GeneID" id="93778678"/>
<dbReference type="KEGG" id="sec:SCH_3363"/>
<dbReference type="HOGENOM" id="CLU_093315_2_2_6"/>
<dbReference type="Proteomes" id="UP000000538">
    <property type="component" value="Chromosome"/>
</dbReference>
<dbReference type="GO" id="GO:0005829">
    <property type="term" value="C:cytosol"/>
    <property type="evidence" value="ECO:0007669"/>
    <property type="project" value="UniProtKB-ARBA"/>
</dbReference>
<dbReference type="GO" id="GO:1990904">
    <property type="term" value="C:ribonucleoprotein complex"/>
    <property type="evidence" value="ECO:0007669"/>
    <property type="project" value="UniProtKB-KW"/>
</dbReference>
<dbReference type="GO" id="GO:0005840">
    <property type="term" value="C:ribosome"/>
    <property type="evidence" value="ECO:0007669"/>
    <property type="project" value="UniProtKB-KW"/>
</dbReference>
<dbReference type="GO" id="GO:0019843">
    <property type="term" value="F:rRNA binding"/>
    <property type="evidence" value="ECO:0007669"/>
    <property type="project" value="UniProtKB-UniRule"/>
</dbReference>
<dbReference type="GO" id="GO:0003735">
    <property type="term" value="F:structural constituent of ribosome"/>
    <property type="evidence" value="ECO:0007669"/>
    <property type="project" value="InterPro"/>
</dbReference>
<dbReference type="GO" id="GO:0006412">
    <property type="term" value="P:translation"/>
    <property type="evidence" value="ECO:0007669"/>
    <property type="project" value="UniProtKB-UniRule"/>
</dbReference>
<dbReference type="CDD" id="cd06089">
    <property type="entry name" value="KOW_RPL26"/>
    <property type="match status" value="1"/>
</dbReference>
<dbReference type="FunFam" id="2.30.30.30:FF:000004">
    <property type="entry name" value="50S ribosomal protein L24"/>
    <property type="match status" value="1"/>
</dbReference>
<dbReference type="Gene3D" id="2.30.30.30">
    <property type="match status" value="1"/>
</dbReference>
<dbReference type="HAMAP" id="MF_01326_B">
    <property type="entry name" value="Ribosomal_uL24_B"/>
    <property type="match status" value="1"/>
</dbReference>
<dbReference type="InterPro" id="IPR005824">
    <property type="entry name" value="KOW"/>
</dbReference>
<dbReference type="InterPro" id="IPR014722">
    <property type="entry name" value="Rib_uL2_dom2"/>
</dbReference>
<dbReference type="InterPro" id="IPR003256">
    <property type="entry name" value="Ribosomal_uL24"/>
</dbReference>
<dbReference type="InterPro" id="IPR005825">
    <property type="entry name" value="Ribosomal_uL24_CS"/>
</dbReference>
<dbReference type="InterPro" id="IPR041988">
    <property type="entry name" value="Ribosomal_uL24_KOW"/>
</dbReference>
<dbReference type="InterPro" id="IPR008991">
    <property type="entry name" value="Translation_prot_SH3-like_sf"/>
</dbReference>
<dbReference type="NCBIfam" id="TIGR01079">
    <property type="entry name" value="rplX_bact"/>
    <property type="match status" value="1"/>
</dbReference>
<dbReference type="PANTHER" id="PTHR12903">
    <property type="entry name" value="MITOCHONDRIAL RIBOSOMAL PROTEIN L24"/>
    <property type="match status" value="1"/>
</dbReference>
<dbReference type="Pfam" id="PF00467">
    <property type="entry name" value="KOW"/>
    <property type="match status" value="1"/>
</dbReference>
<dbReference type="Pfam" id="PF17136">
    <property type="entry name" value="ribosomal_L24"/>
    <property type="match status" value="1"/>
</dbReference>
<dbReference type="SMART" id="SM00739">
    <property type="entry name" value="KOW"/>
    <property type="match status" value="1"/>
</dbReference>
<dbReference type="SUPFAM" id="SSF50104">
    <property type="entry name" value="Translation proteins SH3-like domain"/>
    <property type="match status" value="1"/>
</dbReference>
<dbReference type="PROSITE" id="PS01108">
    <property type="entry name" value="RIBOSOMAL_L24"/>
    <property type="match status" value="1"/>
</dbReference>
<reference key="1">
    <citation type="journal article" date="2005" name="Nucleic Acids Res.">
        <title>The genome sequence of Salmonella enterica serovar Choleraesuis, a highly invasive and resistant zoonotic pathogen.</title>
        <authorList>
            <person name="Chiu C.-H."/>
            <person name="Tang P."/>
            <person name="Chu C."/>
            <person name="Hu S."/>
            <person name="Bao Q."/>
            <person name="Yu J."/>
            <person name="Chou Y.-Y."/>
            <person name="Wang H.-S."/>
            <person name="Lee Y.-S."/>
        </authorList>
    </citation>
    <scope>NUCLEOTIDE SEQUENCE [LARGE SCALE GENOMIC DNA]</scope>
    <source>
        <strain>SC-B67</strain>
    </source>
</reference>
<gene>
    <name evidence="1" type="primary">rplX</name>
    <name type="ordered locus">SCH_3363</name>
</gene>
<proteinExistence type="inferred from homology"/>
<feature type="chain" id="PRO_0000241658" description="Large ribosomal subunit protein uL24">
    <location>
        <begin position="1"/>
        <end position="104"/>
    </location>
</feature>
<accession>Q57J43</accession>
<organism>
    <name type="scientific">Salmonella choleraesuis (strain SC-B67)</name>
    <dbReference type="NCBI Taxonomy" id="321314"/>
    <lineage>
        <taxon>Bacteria</taxon>
        <taxon>Pseudomonadati</taxon>
        <taxon>Pseudomonadota</taxon>
        <taxon>Gammaproteobacteria</taxon>
        <taxon>Enterobacterales</taxon>
        <taxon>Enterobacteriaceae</taxon>
        <taxon>Salmonella</taxon>
    </lineage>
</organism>
<keyword id="KW-0687">Ribonucleoprotein</keyword>
<keyword id="KW-0689">Ribosomal protein</keyword>
<keyword id="KW-0694">RNA-binding</keyword>
<keyword id="KW-0699">rRNA-binding</keyword>
<protein>
    <recommendedName>
        <fullName evidence="1">Large ribosomal subunit protein uL24</fullName>
    </recommendedName>
    <alternativeName>
        <fullName evidence="2">50S ribosomal protein L24</fullName>
    </alternativeName>
</protein>